<reference key="1">
    <citation type="journal article" date="2005" name="PLoS Biol.">
        <title>Major structural differences and novel potential virulence mechanisms from the genomes of multiple Campylobacter species.</title>
        <authorList>
            <person name="Fouts D.E."/>
            <person name="Mongodin E.F."/>
            <person name="Mandrell R.E."/>
            <person name="Miller W.G."/>
            <person name="Rasko D.A."/>
            <person name="Ravel J."/>
            <person name="Brinkac L.M."/>
            <person name="DeBoy R.T."/>
            <person name="Parker C.T."/>
            <person name="Daugherty S.C."/>
            <person name="Dodson R.J."/>
            <person name="Durkin A.S."/>
            <person name="Madupu R."/>
            <person name="Sullivan S.A."/>
            <person name="Shetty J.U."/>
            <person name="Ayodeji M.A."/>
            <person name="Shvartsbeyn A."/>
            <person name="Schatz M.C."/>
            <person name="Badger J.H."/>
            <person name="Fraser C.M."/>
            <person name="Nelson K.E."/>
        </authorList>
    </citation>
    <scope>NUCLEOTIDE SEQUENCE [LARGE SCALE GENOMIC DNA]</scope>
    <source>
        <strain>RM1221</strain>
    </source>
</reference>
<protein>
    <recommendedName>
        <fullName evidence="1">Acyl carrier protein</fullName>
        <shortName evidence="1">ACP</shortName>
    </recommendedName>
</protein>
<name>ACP_CAMJR</name>
<gene>
    <name evidence="1" type="primary">acpP</name>
    <name type="ordered locus">CJE0493</name>
</gene>
<feature type="chain" id="PRO_1000066584" description="Acyl carrier protein">
    <location>
        <begin position="1"/>
        <end position="77"/>
    </location>
</feature>
<feature type="domain" description="Carrier" evidence="2">
    <location>
        <begin position="1"/>
        <end position="76"/>
    </location>
</feature>
<feature type="modified residue" description="O-(pantetheine 4'-phosphoryl)serine" evidence="2">
    <location>
        <position position="36"/>
    </location>
</feature>
<accession>Q5HW23</accession>
<comment type="function">
    <text evidence="1">Carrier of the growing fatty acid chain in fatty acid biosynthesis.</text>
</comment>
<comment type="pathway">
    <text evidence="1">Lipid metabolism; fatty acid biosynthesis.</text>
</comment>
<comment type="subcellular location">
    <subcellularLocation>
        <location evidence="1">Cytoplasm</location>
    </subcellularLocation>
</comment>
<comment type="PTM">
    <text evidence="1">4'-phosphopantetheine is transferred from CoA to a specific serine of apo-ACP by AcpS. This modification is essential for activity because fatty acids are bound in thioester linkage to the sulfhydryl of the prosthetic group.</text>
</comment>
<comment type="similarity">
    <text evidence="1">Belongs to the acyl carrier protein (ACP) family.</text>
</comment>
<sequence length="77" mass="8612">MATFDDVKAVVVEQLSIDADAVKMESKIIEDLGADSLDVVELIMALEEKFEIEIPDSDAEKLIKIEDVVNYIDNLKK</sequence>
<proteinExistence type="inferred from homology"/>
<dbReference type="EMBL" id="CP000025">
    <property type="protein sequence ID" value="AAW35081.1"/>
    <property type="molecule type" value="Genomic_DNA"/>
</dbReference>
<dbReference type="RefSeq" id="WP_002867623.1">
    <property type="nucleotide sequence ID" value="NC_003912.7"/>
</dbReference>
<dbReference type="SMR" id="Q5HW23"/>
<dbReference type="KEGG" id="cjr:CJE0493"/>
<dbReference type="HOGENOM" id="CLU_108696_5_1_7"/>
<dbReference type="UniPathway" id="UPA00094"/>
<dbReference type="GO" id="GO:0005829">
    <property type="term" value="C:cytosol"/>
    <property type="evidence" value="ECO:0007669"/>
    <property type="project" value="TreeGrafter"/>
</dbReference>
<dbReference type="GO" id="GO:0016020">
    <property type="term" value="C:membrane"/>
    <property type="evidence" value="ECO:0007669"/>
    <property type="project" value="GOC"/>
</dbReference>
<dbReference type="GO" id="GO:0000035">
    <property type="term" value="F:acyl binding"/>
    <property type="evidence" value="ECO:0007669"/>
    <property type="project" value="TreeGrafter"/>
</dbReference>
<dbReference type="GO" id="GO:0000036">
    <property type="term" value="F:acyl carrier activity"/>
    <property type="evidence" value="ECO:0007669"/>
    <property type="project" value="UniProtKB-UniRule"/>
</dbReference>
<dbReference type="GO" id="GO:0009245">
    <property type="term" value="P:lipid A biosynthetic process"/>
    <property type="evidence" value="ECO:0007669"/>
    <property type="project" value="TreeGrafter"/>
</dbReference>
<dbReference type="Gene3D" id="1.10.1200.10">
    <property type="entry name" value="ACP-like"/>
    <property type="match status" value="1"/>
</dbReference>
<dbReference type="HAMAP" id="MF_01217">
    <property type="entry name" value="Acyl_carrier"/>
    <property type="match status" value="1"/>
</dbReference>
<dbReference type="InterPro" id="IPR003231">
    <property type="entry name" value="ACP"/>
</dbReference>
<dbReference type="InterPro" id="IPR036736">
    <property type="entry name" value="ACP-like_sf"/>
</dbReference>
<dbReference type="InterPro" id="IPR009081">
    <property type="entry name" value="PP-bd_ACP"/>
</dbReference>
<dbReference type="InterPro" id="IPR006162">
    <property type="entry name" value="Ppantetheine_attach_site"/>
</dbReference>
<dbReference type="NCBIfam" id="TIGR00517">
    <property type="entry name" value="acyl_carrier"/>
    <property type="match status" value="1"/>
</dbReference>
<dbReference type="NCBIfam" id="NF002148">
    <property type="entry name" value="PRK00982.1-2"/>
    <property type="match status" value="1"/>
</dbReference>
<dbReference type="NCBIfam" id="NF002150">
    <property type="entry name" value="PRK00982.1-4"/>
    <property type="match status" value="1"/>
</dbReference>
<dbReference type="PANTHER" id="PTHR20863">
    <property type="entry name" value="ACYL CARRIER PROTEIN"/>
    <property type="match status" value="1"/>
</dbReference>
<dbReference type="PANTHER" id="PTHR20863:SF76">
    <property type="entry name" value="CARRIER DOMAIN-CONTAINING PROTEIN"/>
    <property type="match status" value="1"/>
</dbReference>
<dbReference type="Pfam" id="PF00550">
    <property type="entry name" value="PP-binding"/>
    <property type="match status" value="1"/>
</dbReference>
<dbReference type="SUPFAM" id="SSF47336">
    <property type="entry name" value="ACP-like"/>
    <property type="match status" value="1"/>
</dbReference>
<dbReference type="PROSITE" id="PS50075">
    <property type="entry name" value="CARRIER"/>
    <property type="match status" value="1"/>
</dbReference>
<dbReference type="PROSITE" id="PS00012">
    <property type="entry name" value="PHOSPHOPANTETHEINE"/>
    <property type="match status" value="1"/>
</dbReference>
<organism>
    <name type="scientific">Campylobacter jejuni (strain RM1221)</name>
    <dbReference type="NCBI Taxonomy" id="195099"/>
    <lineage>
        <taxon>Bacteria</taxon>
        <taxon>Pseudomonadati</taxon>
        <taxon>Campylobacterota</taxon>
        <taxon>Epsilonproteobacteria</taxon>
        <taxon>Campylobacterales</taxon>
        <taxon>Campylobacteraceae</taxon>
        <taxon>Campylobacter</taxon>
    </lineage>
</organism>
<evidence type="ECO:0000255" key="1">
    <source>
        <dbReference type="HAMAP-Rule" id="MF_01217"/>
    </source>
</evidence>
<evidence type="ECO:0000255" key="2">
    <source>
        <dbReference type="PROSITE-ProRule" id="PRU00258"/>
    </source>
</evidence>
<keyword id="KW-0963">Cytoplasm</keyword>
<keyword id="KW-0275">Fatty acid biosynthesis</keyword>
<keyword id="KW-0276">Fatty acid metabolism</keyword>
<keyword id="KW-0444">Lipid biosynthesis</keyword>
<keyword id="KW-0443">Lipid metabolism</keyword>
<keyword id="KW-0596">Phosphopantetheine</keyword>
<keyword id="KW-0597">Phosphoprotein</keyword>